<keyword id="KW-1185">Reference proteome</keyword>
<keyword id="KW-0687">Ribonucleoprotein</keyword>
<keyword id="KW-0689">Ribosomal protein</keyword>
<keyword id="KW-0694">RNA-binding</keyword>
<keyword id="KW-0699">rRNA-binding</keyword>
<proteinExistence type="inferred from homology"/>
<organism>
    <name type="scientific">Shewanella denitrificans (strain OS217 / ATCC BAA-1090 / DSM 15013)</name>
    <dbReference type="NCBI Taxonomy" id="318161"/>
    <lineage>
        <taxon>Bacteria</taxon>
        <taxon>Pseudomonadati</taxon>
        <taxon>Pseudomonadota</taxon>
        <taxon>Gammaproteobacteria</taxon>
        <taxon>Alteromonadales</taxon>
        <taxon>Shewanellaceae</taxon>
        <taxon>Shewanella</taxon>
    </lineage>
</organism>
<gene>
    <name evidence="1" type="primary">rpsT</name>
    <name type="ordered locus">Sden_2726</name>
</gene>
<protein>
    <recommendedName>
        <fullName evidence="1">Small ribosomal subunit protein bS20</fullName>
    </recommendedName>
    <alternativeName>
        <fullName evidence="3">30S ribosomal protein S20</fullName>
    </alternativeName>
</protein>
<comment type="function">
    <text evidence="1">Binds directly to 16S ribosomal RNA.</text>
</comment>
<comment type="similarity">
    <text evidence="1">Belongs to the bacterial ribosomal protein bS20 family.</text>
</comment>
<dbReference type="EMBL" id="CP000302">
    <property type="protein sequence ID" value="ABE56005.1"/>
    <property type="molecule type" value="Genomic_DNA"/>
</dbReference>
<dbReference type="RefSeq" id="WP_011497155.1">
    <property type="nucleotide sequence ID" value="NC_007954.1"/>
</dbReference>
<dbReference type="SMR" id="Q12KM1"/>
<dbReference type="STRING" id="318161.Sden_2726"/>
<dbReference type="KEGG" id="sdn:Sden_2726"/>
<dbReference type="eggNOG" id="COG0268">
    <property type="taxonomic scope" value="Bacteria"/>
</dbReference>
<dbReference type="HOGENOM" id="CLU_160655_4_0_6"/>
<dbReference type="OrthoDB" id="9807974at2"/>
<dbReference type="Proteomes" id="UP000001982">
    <property type="component" value="Chromosome"/>
</dbReference>
<dbReference type="GO" id="GO:0005829">
    <property type="term" value="C:cytosol"/>
    <property type="evidence" value="ECO:0007669"/>
    <property type="project" value="TreeGrafter"/>
</dbReference>
<dbReference type="GO" id="GO:0015935">
    <property type="term" value="C:small ribosomal subunit"/>
    <property type="evidence" value="ECO:0007669"/>
    <property type="project" value="TreeGrafter"/>
</dbReference>
<dbReference type="GO" id="GO:0070181">
    <property type="term" value="F:small ribosomal subunit rRNA binding"/>
    <property type="evidence" value="ECO:0007669"/>
    <property type="project" value="TreeGrafter"/>
</dbReference>
<dbReference type="GO" id="GO:0003735">
    <property type="term" value="F:structural constituent of ribosome"/>
    <property type="evidence" value="ECO:0007669"/>
    <property type="project" value="InterPro"/>
</dbReference>
<dbReference type="GO" id="GO:0006412">
    <property type="term" value="P:translation"/>
    <property type="evidence" value="ECO:0007669"/>
    <property type="project" value="UniProtKB-UniRule"/>
</dbReference>
<dbReference type="FunFam" id="1.20.58.110:FF:000001">
    <property type="entry name" value="30S ribosomal protein S20"/>
    <property type="match status" value="1"/>
</dbReference>
<dbReference type="Gene3D" id="1.20.58.110">
    <property type="entry name" value="Ribosomal protein S20"/>
    <property type="match status" value="1"/>
</dbReference>
<dbReference type="HAMAP" id="MF_00500">
    <property type="entry name" value="Ribosomal_bS20"/>
    <property type="match status" value="1"/>
</dbReference>
<dbReference type="InterPro" id="IPR002583">
    <property type="entry name" value="Ribosomal_bS20"/>
</dbReference>
<dbReference type="InterPro" id="IPR036510">
    <property type="entry name" value="Ribosomal_bS20_sf"/>
</dbReference>
<dbReference type="NCBIfam" id="TIGR00029">
    <property type="entry name" value="S20"/>
    <property type="match status" value="1"/>
</dbReference>
<dbReference type="PANTHER" id="PTHR33398">
    <property type="entry name" value="30S RIBOSOMAL PROTEIN S20"/>
    <property type="match status" value="1"/>
</dbReference>
<dbReference type="PANTHER" id="PTHR33398:SF1">
    <property type="entry name" value="SMALL RIBOSOMAL SUBUNIT PROTEIN BS20C"/>
    <property type="match status" value="1"/>
</dbReference>
<dbReference type="Pfam" id="PF01649">
    <property type="entry name" value="Ribosomal_S20p"/>
    <property type="match status" value="1"/>
</dbReference>
<dbReference type="SUPFAM" id="SSF46992">
    <property type="entry name" value="Ribosomal protein S20"/>
    <property type="match status" value="1"/>
</dbReference>
<name>RS20_SHEDO</name>
<sequence length="88" mass="9708">MANSKSAKKRALQSEKRRQHNASRRSMLRTYVKKVIAAIKSGDHKAATEAFAAAQPIVDRMATKGLIHKNKAARQKARLNTKIKALAA</sequence>
<feature type="chain" id="PRO_1000014650" description="Small ribosomal subunit protein bS20">
    <location>
        <begin position="1"/>
        <end position="88"/>
    </location>
</feature>
<feature type="region of interest" description="Disordered" evidence="2">
    <location>
        <begin position="1"/>
        <end position="27"/>
    </location>
</feature>
<accession>Q12KM1</accession>
<evidence type="ECO:0000255" key="1">
    <source>
        <dbReference type="HAMAP-Rule" id="MF_00500"/>
    </source>
</evidence>
<evidence type="ECO:0000256" key="2">
    <source>
        <dbReference type="SAM" id="MobiDB-lite"/>
    </source>
</evidence>
<evidence type="ECO:0000305" key="3"/>
<reference key="1">
    <citation type="submission" date="2006-03" db="EMBL/GenBank/DDBJ databases">
        <title>Complete sequence of Shewanella denitrificans OS217.</title>
        <authorList>
            <consortium name="US DOE Joint Genome Institute"/>
            <person name="Copeland A."/>
            <person name="Lucas S."/>
            <person name="Lapidus A."/>
            <person name="Barry K."/>
            <person name="Detter J.C."/>
            <person name="Glavina del Rio T."/>
            <person name="Hammon N."/>
            <person name="Israni S."/>
            <person name="Dalin E."/>
            <person name="Tice H."/>
            <person name="Pitluck S."/>
            <person name="Brettin T."/>
            <person name="Bruce D."/>
            <person name="Han C."/>
            <person name="Tapia R."/>
            <person name="Gilna P."/>
            <person name="Kiss H."/>
            <person name="Schmutz J."/>
            <person name="Larimer F."/>
            <person name="Land M."/>
            <person name="Hauser L."/>
            <person name="Kyrpides N."/>
            <person name="Lykidis A."/>
            <person name="Richardson P."/>
        </authorList>
    </citation>
    <scope>NUCLEOTIDE SEQUENCE [LARGE SCALE GENOMIC DNA]</scope>
    <source>
        <strain>OS217 / ATCC BAA-1090 / DSM 15013</strain>
    </source>
</reference>